<protein>
    <recommendedName>
        <fullName evidence="5">5-methylthioribulose-1-phosphate/5-deoxyribulose-1-phosphate aldolase</fullName>
        <ecNumber evidence="2 3">4.1.2.62</ecNumber>
    </recommendedName>
</protein>
<accession>Q2RXI1</accession>
<keyword id="KW-0028">Amino-acid biosynthesis</keyword>
<keyword id="KW-0170">Cobalt</keyword>
<keyword id="KW-0456">Lyase</keyword>
<keyword id="KW-0479">Metal-binding</keyword>
<keyword id="KW-0486">Methionine biosynthesis</keyword>
<keyword id="KW-1185">Reference proteome</keyword>
<feature type="chain" id="PRO_0000445035" description="5-methylthioribulose-1-phosphate/5-deoxyribulose-1-phosphate aldolase">
    <location>
        <begin position="1"/>
        <end position="221"/>
    </location>
</feature>
<feature type="active site" description="Proton donor/acceptor" evidence="1">
    <location>
        <position position="75"/>
    </location>
</feature>
<feature type="binding site" evidence="1">
    <location>
        <position position="75"/>
    </location>
    <ligand>
        <name>Co(2+)</name>
        <dbReference type="ChEBI" id="CHEBI:48828"/>
        <note>catalytic</note>
    </ligand>
</feature>
<feature type="binding site" evidence="1">
    <location>
        <position position="94"/>
    </location>
    <ligand>
        <name>Co(2+)</name>
        <dbReference type="ChEBI" id="CHEBI:48828"/>
        <note>catalytic</note>
    </ligand>
</feature>
<feature type="binding site" evidence="1">
    <location>
        <position position="96"/>
    </location>
    <ligand>
        <name>Co(2+)</name>
        <dbReference type="ChEBI" id="CHEBI:48828"/>
        <note>catalytic</note>
    </ligand>
</feature>
<feature type="binding site" evidence="1">
    <location>
        <position position="157"/>
    </location>
    <ligand>
        <name>Co(2+)</name>
        <dbReference type="ChEBI" id="CHEBI:48828"/>
        <note>catalytic</note>
    </ligand>
</feature>
<feature type="site" description="Plays a key role in the stabilization of the transition state and positioning the aldehyde component" evidence="1">
    <location>
        <position position="115"/>
    </location>
</feature>
<feature type="site" description="Plays a key role in the stabilization of the transition state and positioning the aldehyde component" evidence="1">
    <location>
        <position position="133"/>
    </location>
</feature>
<feature type="site" description="Plays a key role in the stabilization of the transition state and positioning the aldehyde component" evidence="1">
    <location>
        <position position="210"/>
    </location>
</feature>
<evidence type="ECO:0000250" key="1">
    <source>
        <dbReference type="UniProtKB" id="P0AB87"/>
    </source>
</evidence>
<evidence type="ECO:0000269" key="2">
    <source>
    </source>
</evidence>
<evidence type="ECO:0000269" key="3">
    <source>
    </source>
</evidence>
<evidence type="ECO:0000303" key="4">
    <source>
    </source>
</evidence>
<evidence type="ECO:0000303" key="5">
    <source>
    </source>
</evidence>
<evidence type="ECO:0000305" key="6"/>
<evidence type="ECO:0000305" key="7">
    <source>
    </source>
</evidence>
<evidence type="ECO:0000312" key="8">
    <source>
        <dbReference type="EMBL" id="ABC21164.1"/>
    </source>
</evidence>
<dbReference type="EC" id="4.1.2.62" evidence="2 3"/>
<dbReference type="EMBL" id="CP000230">
    <property type="protein sequence ID" value="ABC21164.1"/>
    <property type="molecule type" value="Genomic_DNA"/>
</dbReference>
<dbReference type="RefSeq" id="WP_011388112.1">
    <property type="nucleotide sequence ID" value="NC_007643.1"/>
</dbReference>
<dbReference type="RefSeq" id="YP_425451.1">
    <property type="nucleotide sequence ID" value="NC_007643.1"/>
</dbReference>
<dbReference type="SMR" id="Q2RXI1"/>
<dbReference type="STRING" id="269796.Rru_A0359"/>
<dbReference type="EnsemblBacteria" id="ABC21164">
    <property type="protein sequence ID" value="ABC21164"/>
    <property type="gene ID" value="Rru_A0359"/>
</dbReference>
<dbReference type="KEGG" id="rru:Rru_A0359"/>
<dbReference type="PATRIC" id="fig|269796.9.peg.415"/>
<dbReference type="eggNOG" id="COG0235">
    <property type="taxonomic scope" value="Bacteria"/>
</dbReference>
<dbReference type="HOGENOM" id="CLU_006033_3_0_5"/>
<dbReference type="PhylomeDB" id="Q2RXI1"/>
<dbReference type="BioCyc" id="MetaCyc:MONOMER-21152"/>
<dbReference type="UniPathway" id="UPA00904"/>
<dbReference type="Proteomes" id="UP000001929">
    <property type="component" value="Chromosome"/>
</dbReference>
<dbReference type="GO" id="GO:0005829">
    <property type="term" value="C:cytosol"/>
    <property type="evidence" value="ECO:0007669"/>
    <property type="project" value="TreeGrafter"/>
</dbReference>
<dbReference type="GO" id="GO:0016832">
    <property type="term" value="F:aldehyde-lyase activity"/>
    <property type="evidence" value="ECO:0007669"/>
    <property type="project" value="TreeGrafter"/>
</dbReference>
<dbReference type="GO" id="GO:0046872">
    <property type="term" value="F:metal ion binding"/>
    <property type="evidence" value="ECO:0007669"/>
    <property type="project" value="UniProtKB-KW"/>
</dbReference>
<dbReference type="GO" id="GO:0019509">
    <property type="term" value="P:L-methionine salvage from methylthioadenosine"/>
    <property type="evidence" value="ECO:0007669"/>
    <property type="project" value="UniProtKB-UniPathway"/>
</dbReference>
<dbReference type="GO" id="GO:0019323">
    <property type="term" value="P:pentose catabolic process"/>
    <property type="evidence" value="ECO:0007669"/>
    <property type="project" value="TreeGrafter"/>
</dbReference>
<dbReference type="Gene3D" id="3.40.225.10">
    <property type="entry name" value="Class II aldolase/adducin N-terminal domain"/>
    <property type="match status" value="1"/>
</dbReference>
<dbReference type="InterPro" id="IPR050197">
    <property type="entry name" value="Aldolase_class_II_sugar_metab"/>
</dbReference>
<dbReference type="InterPro" id="IPR001303">
    <property type="entry name" value="Aldolase_II/adducin_N"/>
</dbReference>
<dbReference type="InterPro" id="IPR036409">
    <property type="entry name" value="Aldolase_II/adducin_N_sf"/>
</dbReference>
<dbReference type="PANTHER" id="PTHR22789:SF0">
    <property type="entry name" value="3-OXO-TETRONATE 4-PHOSPHATE DECARBOXYLASE-RELATED"/>
    <property type="match status" value="1"/>
</dbReference>
<dbReference type="PANTHER" id="PTHR22789">
    <property type="entry name" value="FUCULOSE PHOSPHATE ALDOLASE"/>
    <property type="match status" value="1"/>
</dbReference>
<dbReference type="Pfam" id="PF00596">
    <property type="entry name" value="Aldolase_II"/>
    <property type="match status" value="1"/>
</dbReference>
<dbReference type="SMART" id="SM01007">
    <property type="entry name" value="Aldolase_II"/>
    <property type="match status" value="1"/>
</dbReference>
<dbReference type="SUPFAM" id="SSF53639">
    <property type="entry name" value="AraD/HMP-PK domain-like"/>
    <property type="match status" value="1"/>
</dbReference>
<reference key="1">
    <citation type="journal article" date="2011" name="Stand. Genomic Sci.">
        <title>Complete genome sequence of Rhodospirillum rubrum type strain (S1).</title>
        <authorList>
            <person name="Munk A.C."/>
            <person name="Copeland A."/>
            <person name="Lucas S."/>
            <person name="Lapidus A."/>
            <person name="Del Rio T.G."/>
            <person name="Barry K."/>
            <person name="Detter J.C."/>
            <person name="Hammon N."/>
            <person name="Israni S."/>
            <person name="Pitluck S."/>
            <person name="Brettin T."/>
            <person name="Bruce D."/>
            <person name="Han C."/>
            <person name="Tapia R."/>
            <person name="Gilna P."/>
            <person name="Schmutz J."/>
            <person name="Larimer F."/>
            <person name="Land M."/>
            <person name="Kyrpides N.C."/>
            <person name="Mavromatis K."/>
            <person name="Richardson P."/>
            <person name="Rohde M."/>
            <person name="Goeker M."/>
            <person name="Klenk H.P."/>
            <person name="Zhang Y."/>
            <person name="Roberts G.P."/>
            <person name="Reslewic S."/>
            <person name="Schwartz D.C."/>
        </authorList>
    </citation>
    <scope>NUCLEOTIDE SEQUENCE [LARGE SCALE GENOMIC DNA]</scope>
    <source>
        <strain>ATCC 11170 / ATH 1.1.1 / DSM 467 / LMG 4362 / NCIMB 8255 / S1</strain>
    </source>
</reference>
<reference key="2">
    <citation type="journal article" date="2017" name="Proc. Natl. Acad. Sci. U.S.A.">
        <title>Microbial pathway for anaerobic 5'-methylthioadenosine metabolism coupled to ethylene formation.</title>
        <authorList>
            <person name="North J.A."/>
            <person name="Miller A.R."/>
            <person name="Wildenthal J.A."/>
            <person name="Young S.J."/>
            <person name="Tabita F.R."/>
        </authorList>
    </citation>
    <scope>FUNCTION</scope>
    <scope>CATALYTIC ACTIVITY</scope>
    <scope>PATHWAY</scope>
    <scope>DISRUPTION PHENOTYPE</scope>
    <source>
        <strain>ATCC 11170 / ATH 1.1.1 / DSM 467 / LMG 4362 / NCIMB 8255 / S1</strain>
    </source>
</reference>
<reference key="3">
    <citation type="journal article" date="2020" name="Mol. Microbiol.">
        <title>A bifunctional salvage pathway for two distinct S-adenosylmethionine by-products that is widespread in bacteria, including pathogenic Escherichia coli.</title>
        <authorList>
            <person name="North J.A."/>
            <person name="Wildenthal J.A."/>
            <person name="Erb T.J."/>
            <person name="Evans B.S."/>
            <person name="Byerly K.M."/>
            <person name="Gerlt J.A."/>
            <person name="Tabita F.R."/>
        </authorList>
    </citation>
    <scope>FUNCTION</scope>
    <scope>CATALYTIC ACTIVITY</scope>
    <scope>COFACTOR</scope>
    <scope>BIOPHYSICOCHEMICAL PROPERTIES</scope>
    <scope>DISRUPTION PHENOTYPE</scope>
</reference>
<sequence>MPGSRIALRHGLIDAARQVTTLGLNKGTAGNLSVRAGDGLLITPSGLQAADLRPNDIVFIDSEGEWRGPRKPSSEWRFHHDILAERPDVGAVVHTHAPFSTVLACLGRPIPAFHYMVAMAGGNDIRIGAYATFGTAELSRHALAAMEGRKACLLAHHGMIATGRTLKAAIKLAVEVEELAEQYWRCLQIAEPEILPADEMERVLEKFKTYGDNAQLPSPPA</sequence>
<gene>
    <name evidence="4" type="primary">ald2</name>
    <name evidence="8" type="ordered locus">Rru_A0359</name>
</gene>
<name>ALD2_RHORT</name>
<comment type="function">
    <text evidence="2 3">Uses 5-methylthioribulose-1-phosphate to yield 2-(methylthio)acetaldehyde and dihydroxyacetone phosphate (PubMed:29133429, PubMed:31950558). Can also use 5-deoxyribulose 1-phosphate to yield acetaldehyde and dihydroxyacetone phosphate (PubMed:31950558). Part of a bifunctional DHAP-shunt salvage pathway for SAM by-products (PubMed:31950558).</text>
</comment>
<comment type="catalytic activity">
    <reaction evidence="2 3">
        <text>5-(methylsulfanyl)-D-ribulose 1-phosphate = 2-(methylsulfanyl)acetaldehyde + dihydroxyacetone phosphate</text>
        <dbReference type="Rhea" id="RHEA:56940"/>
        <dbReference type="ChEBI" id="CHEBI:57642"/>
        <dbReference type="ChEBI" id="CHEBI:58548"/>
        <dbReference type="ChEBI" id="CHEBI:141184"/>
        <dbReference type="EC" id="4.1.2.62"/>
    </reaction>
    <physiologicalReaction direction="left-to-right" evidence="3">
        <dbReference type="Rhea" id="RHEA:56941"/>
    </physiologicalReaction>
</comment>
<comment type="catalytic activity">
    <reaction evidence="3">
        <text>5-deoxy-D-ribulose 1-phosphate = dihydroxyacetone phosphate + acetaldehyde</text>
        <dbReference type="Rhea" id="RHEA:61300"/>
        <dbReference type="ChEBI" id="CHEBI:15343"/>
        <dbReference type="ChEBI" id="CHEBI:57642"/>
        <dbReference type="ChEBI" id="CHEBI:144504"/>
        <dbReference type="EC" id="4.1.2.62"/>
    </reaction>
    <physiologicalReaction direction="left-to-right" evidence="3">
        <dbReference type="Rhea" id="RHEA:61301"/>
    </physiologicalReaction>
</comment>
<comment type="cofactor">
    <cofactor evidence="3">
        <name>Co(2+)</name>
        <dbReference type="ChEBI" id="CHEBI:48828"/>
    </cofactor>
    <text evidence="1 3">Binds 1 cobalt ion per subunit (By similarity). Can also use Ni(2+) (PubMed:31950558).</text>
</comment>
<comment type="biophysicochemical properties">
    <kinetics>
        <KM evidence="3">288 uM for 5-methylthioribulose-1-phosphate</KM>
        <KM evidence="3">229 uM for 5-deoxyribulose 1-phosphate</KM>
        <text evidence="3">kcat is 0.94 sec(-1) with 5-methylthioribulose-1-phosphate as substrate. kcat is 1.94 sec(-1) with 5-deoxyribulose 1-phosphate as substrate. kcat is 0.44 sec(-1) with ribulose-1-phosphate as substrate.</text>
    </kinetics>
</comment>
<comment type="pathway">
    <text evidence="7">Amino-acid biosynthesis; L-methionine biosynthesis via salvage pathway.</text>
</comment>
<comment type="disruption phenotype">
    <text evidence="2 3">Mutants produce only low levels of ethylene when grown on MTA (PubMed:29133429). Deletion mutant accumulates both S-methyl-5'-thioadenosine and 5'-deoxyadenosine extracellularly (PubMed:31950558).</text>
</comment>
<comment type="similarity">
    <text evidence="6">Belongs to the aldolase class II family.</text>
</comment>
<organism>
    <name type="scientific">Rhodospirillum rubrum (strain ATCC 11170 / ATH 1.1.1 / DSM 467 / LMG 4362 / NCIMB 8255 / S1)</name>
    <dbReference type="NCBI Taxonomy" id="269796"/>
    <lineage>
        <taxon>Bacteria</taxon>
        <taxon>Pseudomonadati</taxon>
        <taxon>Pseudomonadota</taxon>
        <taxon>Alphaproteobacteria</taxon>
        <taxon>Rhodospirillales</taxon>
        <taxon>Rhodospirillaceae</taxon>
        <taxon>Rhodospirillum</taxon>
    </lineage>
</organism>
<proteinExistence type="evidence at protein level"/>